<organism>
    <name type="scientific">Homo sapiens</name>
    <name type="common">Human</name>
    <dbReference type="NCBI Taxonomy" id="9606"/>
    <lineage>
        <taxon>Eukaryota</taxon>
        <taxon>Metazoa</taxon>
        <taxon>Chordata</taxon>
        <taxon>Craniata</taxon>
        <taxon>Vertebrata</taxon>
        <taxon>Euteleostomi</taxon>
        <taxon>Mammalia</taxon>
        <taxon>Eutheria</taxon>
        <taxon>Euarchontoglires</taxon>
        <taxon>Primates</taxon>
        <taxon>Haplorrhini</taxon>
        <taxon>Catarrhini</taxon>
        <taxon>Hominidae</taxon>
        <taxon>Homo</taxon>
    </lineage>
</organism>
<accession>P62316</accession>
<accession>A8K797</accession>
<accession>J3KPM5</accession>
<accession>P43330</accession>
<protein>
    <recommendedName>
        <fullName>Small nuclear ribonucleoprotein Sm D2</fullName>
        <shortName>Sm-D2</shortName>
    </recommendedName>
    <alternativeName>
        <fullName>snRNP core protein D2</fullName>
    </alternativeName>
</protein>
<keyword id="KW-0002">3D-structure</keyword>
<keyword id="KW-0007">Acetylation</keyword>
<keyword id="KW-0025">Alternative splicing</keyword>
<keyword id="KW-0963">Cytoplasm</keyword>
<keyword id="KW-0903">Direct protein sequencing</keyword>
<keyword id="KW-1017">Isopeptide bond</keyword>
<keyword id="KW-0507">mRNA processing</keyword>
<keyword id="KW-0508">mRNA splicing</keyword>
<keyword id="KW-0539">Nucleus</keyword>
<keyword id="KW-0597">Phosphoprotein</keyword>
<keyword id="KW-1267">Proteomics identification</keyword>
<keyword id="KW-1185">Reference proteome</keyword>
<keyword id="KW-0687">Ribonucleoprotein</keyword>
<keyword id="KW-0747">Spliceosome</keyword>
<keyword id="KW-0832">Ubl conjugation</keyword>
<reference key="1">
    <citation type="journal article" date="1994" name="Proc. Natl. Acad. Sci. U.S.A.">
        <title>cDNA cloning of the Sm proteins D2 and D3 from human small nuclear ribonucleoproteins: evidence for a direct D1-D2 interaction.</title>
        <authorList>
            <person name="Lehmeier T."/>
            <person name="Raker V."/>
            <person name="Hermann H."/>
            <person name="Luehrmann R."/>
        </authorList>
    </citation>
    <scope>NUCLEOTIDE SEQUENCE [MRNA] (ISOFORM 1)</scope>
    <scope>PROTEIN SEQUENCE OF 75-96 AND 103-118</scope>
</reference>
<reference key="2">
    <citation type="journal article" date="2004" name="Nat. Genet.">
        <title>Complete sequencing and characterization of 21,243 full-length human cDNAs.</title>
        <authorList>
            <person name="Ota T."/>
            <person name="Suzuki Y."/>
            <person name="Nishikawa T."/>
            <person name="Otsuki T."/>
            <person name="Sugiyama T."/>
            <person name="Irie R."/>
            <person name="Wakamatsu A."/>
            <person name="Hayashi K."/>
            <person name="Sato H."/>
            <person name="Nagai K."/>
            <person name="Kimura K."/>
            <person name="Makita H."/>
            <person name="Sekine M."/>
            <person name="Obayashi M."/>
            <person name="Nishi T."/>
            <person name="Shibahara T."/>
            <person name="Tanaka T."/>
            <person name="Ishii S."/>
            <person name="Yamamoto J."/>
            <person name="Saito K."/>
            <person name="Kawai Y."/>
            <person name="Isono Y."/>
            <person name="Nakamura Y."/>
            <person name="Nagahari K."/>
            <person name="Murakami K."/>
            <person name="Yasuda T."/>
            <person name="Iwayanagi T."/>
            <person name="Wagatsuma M."/>
            <person name="Shiratori A."/>
            <person name="Sudo H."/>
            <person name="Hosoiri T."/>
            <person name="Kaku Y."/>
            <person name="Kodaira H."/>
            <person name="Kondo H."/>
            <person name="Sugawara M."/>
            <person name="Takahashi M."/>
            <person name="Kanda K."/>
            <person name="Yokoi T."/>
            <person name="Furuya T."/>
            <person name="Kikkawa E."/>
            <person name="Omura Y."/>
            <person name="Abe K."/>
            <person name="Kamihara K."/>
            <person name="Katsuta N."/>
            <person name="Sato K."/>
            <person name="Tanikawa M."/>
            <person name="Yamazaki M."/>
            <person name="Ninomiya K."/>
            <person name="Ishibashi T."/>
            <person name="Yamashita H."/>
            <person name="Murakawa K."/>
            <person name="Fujimori K."/>
            <person name="Tanai H."/>
            <person name="Kimata M."/>
            <person name="Watanabe M."/>
            <person name="Hiraoka S."/>
            <person name="Chiba Y."/>
            <person name="Ishida S."/>
            <person name="Ono Y."/>
            <person name="Takiguchi S."/>
            <person name="Watanabe S."/>
            <person name="Yosida M."/>
            <person name="Hotuta T."/>
            <person name="Kusano J."/>
            <person name="Kanehori K."/>
            <person name="Takahashi-Fujii A."/>
            <person name="Hara H."/>
            <person name="Tanase T.-O."/>
            <person name="Nomura Y."/>
            <person name="Togiya S."/>
            <person name="Komai F."/>
            <person name="Hara R."/>
            <person name="Takeuchi K."/>
            <person name="Arita M."/>
            <person name="Imose N."/>
            <person name="Musashino K."/>
            <person name="Yuuki H."/>
            <person name="Oshima A."/>
            <person name="Sasaki N."/>
            <person name="Aotsuka S."/>
            <person name="Yoshikawa Y."/>
            <person name="Matsunawa H."/>
            <person name="Ichihara T."/>
            <person name="Shiohata N."/>
            <person name="Sano S."/>
            <person name="Moriya S."/>
            <person name="Momiyama H."/>
            <person name="Satoh N."/>
            <person name="Takami S."/>
            <person name="Terashima Y."/>
            <person name="Suzuki O."/>
            <person name="Nakagawa S."/>
            <person name="Senoh A."/>
            <person name="Mizoguchi H."/>
            <person name="Goto Y."/>
            <person name="Shimizu F."/>
            <person name="Wakebe H."/>
            <person name="Hishigaki H."/>
            <person name="Watanabe T."/>
            <person name="Sugiyama A."/>
            <person name="Takemoto M."/>
            <person name="Kawakami B."/>
            <person name="Yamazaki M."/>
            <person name="Watanabe K."/>
            <person name="Kumagai A."/>
            <person name="Itakura S."/>
            <person name="Fukuzumi Y."/>
            <person name="Fujimori Y."/>
            <person name="Komiyama M."/>
            <person name="Tashiro H."/>
            <person name="Tanigami A."/>
            <person name="Fujiwara T."/>
            <person name="Ono T."/>
            <person name="Yamada K."/>
            <person name="Fujii Y."/>
            <person name="Ozaki K."/>
            <person name="Hirao M."/>
            <person name="Ohmori Y."/>
            <person name="Kawabata A."/>
            <person name="Hikiji T."/>
            <person name="Kobatake N."/>
            <person name="Inagaki H."/>
            <person name="Ikema Y."/>
            <person name="Okamoto S."/>
            <person name="Okitani R."/>
            <person name="Kawakami T."/>
            <person name="Noguchi S."/>
            <person name="Itoh T."/>
            <person name="Shigeta K."/>
            <person name="Senba T."/>
            <person name="Matsumura K."/>
            <person name="Nakajima Y."/>
            <person name="Mizuno T."/>
            <person name="Morinaga M."/>
            <person name="Sasaki M."/>
            <person name="Togashi T."/>
            <person name="Oyama M."/>
            <person name="Hata H."/>
            <person name="Watanabe M."/>
            <person name="Komatsu T."/>
            <person name="Mizushima-Sugano J."/>
            <person name="Satoh T."/>
            <person name="Shirai Y."/>
            <person name="Takahashi Y."/>
            <person name="Nakagawa K."/>
            <person name="Okumura K."/>
            <person name="Nagase T."/>
            <person name="Nomura N."/>
            <person name="Kikuchi H."/>
            <person name="Masuho Y."/>
            <person name="Yamashita R."/>
            <person name="Nakai K."/>
            <person name="Yada T."/>
            <person name="Nakamura Y."/>
            <person name="Ohara O."/>
            <person name="Isogai T."/>
            <person name="Sugano S."/>
        </authorList>
    </citation>
    <scope>NUCLEOTIDE SEQUENCE [LARGE SCALE MRNA] (ISOFORM 1)</scope>
</reference>
<reference key="3">
    <citation type="journal article" date="2004" name="Nature">
        <title>The DNA sequence and biology of human chromosome 19.</title>
        <authorList>
            <person name="Grimwood J."/>
            <person name="Gordon L.A."/>
            <person name="Olsen A.S."/>
            <person name="Terry A."/>
            <person name="Schmutz J."/>
            <person name="Lamerdin J.E."/>
            <person name="Hellsten U."/>
            <person name="Goodstein D."/>
            <person name="Couronne O."/>
            <person name="Tran-Gyamfi M."/>
            <person name="Aerts A."/>
            <person name="Altherr M."/>
            <person name="Ashworth L."/>
            <person name="Bajorek E."/>
            <person name="Black S."/>
            <person name="Branscomb E."/>
            <person name="Caenepeel S."/>
            <person name="Carrano A.V."/>
            <person name="Caoile C."/>
            <person name="Chan Y.M."/>
            <person name="Christensen M."/>
            <person name="Cleland C.A."/>
            <person name="Copeland A."/>
            <person name="Dalin E."/>
            <person name="Dehal P."/>
            <person name="Denys M."/>
            <person name="Detter J.C."/>
            <person name="Escobar J."/>
            <person name="Flowers D."/>
            <person name="Fotopulos D."/>
            <person name="Garcia C."/>
            <person name="Georgescu A.M."/>
            <person name="Glavina T."/>
            <person name="Gomez M."/>
            <person name="Gonzales E."/>
            <person name="Groza M."/>
            <person name="Hammon N."/>
            <person name="Hawkins T."/>
            <person name="Haydu L."/>
            <person name="Ho I."/>
            <person name="Huang W."/>
            <person name="Israni S."/>
            <person name="Jett J."/>
            <person name="Kadner K."/>
            <person name="Kimball H."/>
            <person name="Kobayashi A."/>
            <person name="Larionov V."/>
            <person name="Leem S.-H."/>
            <person name="Lopez F."/>
            <person name="Lou Y."/>
            <person name="Lowry S."/>
            <person name="Malfatti S."/>
            <person name="Martinez D."/>
            <person name="McCready P.M."/>
            <person name="Medina C."/>
            <person name="Morgan J."/>
            <person name="Nelson K."/>
            <person name="Nolan M."/>
            <person name="Ovcharenko I."/>
            <person name="Pitluck S."/>
            <person name="Pollard M."/>
            <person name="Popkie A.P."/>
            <person name="Predki P."/>
            <person name="Quan G."/>
            <person name="Ramirez L."/>
            <person name="Rash S."/>
            <person name="Retterer J."/>
            <person name="Rodriguez A."/>
            <person name="Rogers S."/>
            <person name="Salamov A."/>
            <person name="Salazar A."/>
            <person name="She X."/>
            <person name="Smith D."/>
            <person name="Slezak T."/>
            <person name="Solovyev V."/>
            <person name="Thayer N."/>
            <person name="Tice H."/>
            <person name="Tsai M."/>
            <person name="Ustaszewska A."/>
            <person name="Vo N."/>
            <person name="Wagner M."/>
            <person name="Wheeler J."/>
            <person name="Wu K."/>
            <person name="Xie G."/>
            <person name="Yang J."/>
            <person name="Dubchak I."/>
            <person name="Furey T.S."/>
            <person name="DeJong P."/>
            <person name="Dickson M."/>
            <person name="Gordon D."/>
            <person name="Eichler E.E."/>
            <person name="Pennacchio L.A."/>
            <person name="Richardson P."/>
            <person name="Stubbs L."/>
            <person name="Rokhsar D.S."/>
            <person name="Myers R.M."/>
            <person name="Rubin E.M."/>
            <person name="Lucas S.M."/>
        </authorList>
    </citation>
    <scope>NUCLEOTIDE SEQUENCE [LARGE SCALE GENOMIC DNA]</scope>
</reference>
<reference key="4">
    <citation type="submission" date="2005-07" db="EMBL/GenBank/DDBJ databases">
        <authorList>
            <person name="Mural R.J."/>
            <person name="Istrail S."/>
            <person name="Sutton G.G."/>
            <person name="Florea L."/>
            <person name="Halpern A.L."/>
            <person name="Mobarry C.M."/>
            <person name="Lippert R."/>
            <person name="Walenz B."/>
            <person name="Shatkay H."/>
            <person name="Dew I."/>
            <person name="Miller J.R."/>
            <person name="Flanigan M.J."/>
            <person name="Edwards N.J."/>
            <person name="Bolanos R."/>
            <person name="Fasulo D."/>
            <person name="Halldorsson B.V."/>
            <person name="Hannenhalli S."/>
            <person name="Turner R."/>
            <person name="Yooseph S."/>
            <person name="Lu F."/>
            <person name="Nusskern D.R."/>
            <person name="Shue B.C."/>
            <person name="Zheng X.H."/>
            <person name="Zhong F."/>
            <person name="Delcher A.L."/>
            <person name="Huson D.H."/>
            <person name="Kravitz S.A."/>
            <person name="Mouchard L."/>
            <person name="Reinert K."/>
            <person name="Remington K.A."/>
            <person name="Clark A.G."/>
            <person name="Waterman M.S."/>
            <person name="Eichler E.E."/>
            <person name="Adams M.D."/>
            <person name="Hunkapiller M.W."/>
            <person name="Myers E.W."/>
            <person name="Venter J.C."/>
        </authorList>
    </citation>
    <scope>NUCLEOTIDE SEQUENCE [LARGE SCALE GENOMIC DNA]</scope>
</reference>
<reference key="5">
    <citation type="journal article" date="2004" name="Genome Res.">
        <title>The status, quality, and expansion of the NIH full-length cDNA project: the Mammalian Gene Collection (MGC).</title>
        <authorList>
            <consortium name="The MGC Project Team"/>
        </authorList>
    </citation>
    <scope>NUCLEOTIDE SEQUENCE [LARGE SCALE MRNA] (ISOFORMS 1 AND 2)</scope>
    <source>
        <tissue>Lung</tissue>
    </source>
</reference>
<reference key="6">
    <citation type="submission" date="2008-02" db="UniProtKB">
        <authorList>
            <person name="Bienvenut W.V."/>
            <person name="Calvo F."/>
            <person name="Matallanas D."/>
            <person name="Cooper W.N."/>
            <person name="Kolch W."/>
        </authorList>
    </citation>
    <scope>PROTEIN SEQUENCE OF 2-47; 72-79 AND 103-118</scope>
    <scope>CLEAVAGE OF INITIATOR METHIONINE</scope>
    <scope>ACETYLATION AT SER-2</scope>
    <scope>IDENTIFICATION BY MASS SPECTROMETRY</scope>
    <source>
        <tissue>Cervix carcinoma</tissue>
        <tissue>Mammary carcinoma</tissue>
    </source>
</reference>
<reference key="7">
    <citation type="journal article" date="1999" name="Proc. Natl. Acad. Sci. U.S.A.">
        <title>SMN mutants of spinal muscular atrophy patients are defective in binding to snRNP proteins.</title>
        <authorList>
            <person name="Pellizzoni L."/>
            <person name="Charroux B."/>
            <person name="Dreyfuss G."/>
        </authorList>
    </citation>
    <scope>INTERACTION WITH SMN1</scope>
</reference>
<reference key="8">
    <citation type="journal article" date="2002" name="RNA">
        <title>Purification and characterization of native spliceosomes suitable for three-dimensional structural analysis.</title>
        <authorList>
            <person name="Jurica M.S."/>
            <person name="Licklider L.J."/>
            <person name="Gygi S.P."/>
            <person name="Grigorieff N."/>
            <person name="Moore M.J."/>
        </authorList>
    </citation>
    <scope>IDENTIFICATION BY MASS SPECTROMETRY</scope>
    <scope>IDENTIFICATION IN THE SPLICEOSOMAL C COMPLEX</scope>
    <scope>FUNCTION</scope>
    <scope>SUBCELLULAR LOCATION</scope>
    <scope>SUBUNIT</scope>
</reference>
<reference key="9">
    <citation type="journal article" date="2003" name="Nature">
        <title>Proteomic characterization of the human centrosome by protein correlation profiling.</title>
        <authorList>
            <person name="Andersen J.S."/>
            <person name="Wilkinson C.J."/>
            <person name="Mayor T."/>
            <person name="Mortensen P."/>
            <person name="Nigg E.A."/>
            <person name="Mann M."/>
        </authorList>
    </citation>
    <scope>IDENTIFICATION BY MASS SPECTROMETRY</scope>
    <source>
        <tissue>Lymphoblast</tissue>
    </source>
</reference>
<reference key="10">
    <citation type="journal article" date="2004" name="RNA">
        <title>The human 18S U11/U12 snRNP contains a set of novel proteins not found in the U2-dependent spliceosome.</title>
        <authorList>
            <person name="Will C.L."/>
            <person name="Schneider C."/>
            <person name="Hossbach M."/>
            <person name="Urlaub H."/>
            <person name="Rauhut R."/>
            <person name="Elbashir S."/>
            <person name="Tuschl T."/>
            <person name="Luehrmann R."/>
        </authorList>
    </citation>
    <scope>IDENTIFICATION IN A COMPLEX WITH THE MINOR SPLICEOSOME</scope>
    <scope>IDENTIFICATION BY MASS SPECTROMETRY</scope>
</reference>
<reference key="11">
    <citation type="journal article" date="2005" name="Mol. Cell. Biol.">
        <title>Specific sequence features, recognized by the SMN complex, identify snRNAs and determine their fate as snRNPs.</title>
        <authorList>
            <person name="Golembe T.J."/>
            <person name="Yong J."/>
            <person name="Dreyfuss G."/>
        </authorList>
    </citation>
    <scope>IDENTIFICATION IN THE SMN-SM COMPLEX</scope>
</reference>
<reference key="12">
    <citation type="journal article" date="2008" name="Cell">
        <title>An assembly chaperone collaborates with the SMN complex to generate spliceosomal SnRNPs.</title>
        <authorList>
            <person name="Chari A."/>
            <person name="Golas M.M."/>
            <person name="Klingenhager M."/>
            <person name="Neuenkirchen N."/>
            <person name="Sander B."/>
            <person name="Englbrecht C."/>
            <person name="Sickmann A."/>
            <person name="Stark H."/>
            <person name="Fischer U."/>
        </authorList>
    </citation>
    <scope>FUNCTION IN SNRNP BIOGENESIS</scope>
    <scope>IDENTIFICATION IN 6S PICLN-SM COMPLEX</scope>
    <scope>IDENTIFICATION IN SMN-SM COMPLEX</scope>
    <scope>SUBCELLULAR LOCATION</scope>
</reference>
<reference key="13">
    <citation type="journal article" date="2008" name="Proc. Natl. Acad. Sci. U.S.A.">
        <title>A quantitative atlas of mitotic phosphorylation.</title>
        <authorList>
            <person name="Dephoure N."/>
            <person name="Zhou C."/>
            <person name="Villen J."/>
            <person name="Beausoleil S.A."/>
            <person name="Bakalarski C.E."/>
            <person name="Elledge S.J."/>
            <person name="Gygi S.P."/>
        </authorList>
    </citation>
    <scope>IDENTIFICATION BY MASS SPECTROMETRY [LARGE SCALE ANALYSIS]</scope>
    <source>
        <tissue>Cervix carcinoma</tissue>
    </source>
</reference>
<reference key="14">
    <citation type="journal article" date="2010" name="Sci. Signal.">
        <title>Quantitative phosphoproteomics reveals widespread full phosphorylation site occupancy during mitosis.</title>
        <authorList>
            <person name="Olsen J.V."/>
            <person name="Vermeulen M."/>
            <person name="Santamaria A."/>
            <person name="Kumar C."/>
            <person name="Miller M.L."/>
            <person name="Jensen L.J."/>
            <person name="Gnad F."/>
            <person name="Cox J."/>
            <person name="Jensen T.S."/>
            <person name="Nigg E.A."/>
            <person name="Brunak S."/>
            <person name="Mann M."/>
        </authorList>
    </citation>
    <scope>PHOSPHORYLATION [LARGE SCALE ANALYSIS] AT THR-12</scope>
    <scope>IDENTIFICATION BY MASS SPECTROMETRY [LARGE SCALE ANALYSIS]</scope>
    <source>
        <tissue>Cervix carcinoma</tissue>
    </source>
</reference>
<reference key="15">
    <citation type="journal article" date="2011" name="BMC Syst. Biol.">
        <title>Initial characterization of the human central proteome.</title>
        <authorList>
            <person name="Burkard T.R."/>
            <person name="Planyavsky M."/>
            <person name="Kaupe I."/>
            <person name="Breitwieser F.P."/>
            <person name="Buerckstuemmer T."/>
            <person name="Bennett K.L."/>
            <person name="Superti-Furga G."/>
            <person name="Colinge J."/>
        </authorList>
    </citation>
    <scope>IDENTIFICATION BY MASS SPECTROMETRY [LARGE SCALE ANALYSIS]</scope>
</reference>
<reference key="16">
    <citation type="journal article" date="2012" name="Proc. Natl. Acad. Sci. U.S.A.">
        <title>N-terminal acetylome analyses and functional insights of the N-terminal acetyltransferase NatB.</title>
        <authorList>
            <person name="Van Damme P."/>
            <person name="Lasa M."/>
            <person name="Polevoda B."/>
            <person name="Gazquez C."/>
            <person name="Elosegui-Artola A."/>
            <person name="Kim D.S."/>
            <person name="De Juan-Pardo E."/>
            <person name="Demeyer K."/>
            <person name="Hole K."/>
            <person name="Larrea E."/>
            <person name="Timmerman E."/>
            <person name="Prieto J."/>
            <person name="Arnesen T."/>
            <person name="Sherman F."/>
            <person name="Gevaert K."/>
            <person name="Aldabe R."/>
        </authorList>
    </citation>
    <scope>ACETYLATION [LARGE SCALE ANALYSIS] AT SER-2</scope>
    <scope>CLEAVAGE OF INITIATOR METHIONINE [LARGE SCALE ANALYSIS]</scope>
    <scope>IDENTIFICATION BY MASS SPECTROMETRY [LARGE SCALE ANALYSIS]</scope>
</reference>
<reference key="17">
    <citation type="journal article" date="2013" name="J. Proteome Res.">
        <title>Toward a comprehensive characterization of a human cancer cell phosphoproteome.</title>
        <authorList>
            <person name="Zhou H."/>
            <person name="Di Palma S."/>
            <person name="Preisinger C."/>
            <person name="Peng M."/>
            <person name="Polat A.N."/>
            <person name="Heck A.J."/>
            <person name="Mohammed S."/>
        </authorList>
    </citation>
    <scope>PHOSPHORYLATION [LARGE SCALE ANALYSIS] AT SER-9 AND THR-12</scope>
    <scope>IDENTIFICATION BY MASS SPECTROMETRY [LARGE SCALE ANALYSIS]</scope>
    <source>
        <tissue>Cervix carcinoma</tissue>
        <tissue>Erythroleukemia</tissue>
    </source>
</reference>
<reference key="18">
    <citation type="journal article" date="2015" name="Cell Rep.">
        <title>SUMO-2 orchestrates chromatin modifiers in response to DNA damage.</title>
        <authorList>
            <person name="Hendriks I.A."/>
            <person name="Treffers L.W."/>
            <person name="Verlaan-de Vries M."/>
            <person name="Olsen J.V."/>
            <person name="Vertegaal A.C."/>
        </authorList>
    </citation>
    <scope>IDENTIFICATION BY MASS SPECTROMETRY [LARGE SCALE ANALYSIS]</scope>
</reference>
<reference key="19">
    <citation type="journal article" date="2015" name="Proteomics">
        <title>N-terminome analysis of the human mitochondrial proteome.</title>
        <authorList>
            <person name="Vaca Jacome A.S."/>
            <person name="Rabilloud T."/>
            <person name="Schaeffer-Reiss C."/>
            <person name="Rompais M."/>
            <person name="Ayoub D."/>
            <person name="Lane L."/>
            <person name="Bairoch A."/>
            <person name="Van Dorsselaer A."/>
            <person name="Carapito C."/>
        </authorList>
    </citation>
    <scope>ACETYLATION [LARGE SCALE ANALYSIS] AT SER-2</scope>
    <scope>CLEAVAGE OF INITIATOR METHIONINE [LARGE SCALE ANALYSIS]</scope>
    <scope>IDENTIFICATION BY MASS SPECTROMETRY [LARGE SCALE ANALYSIS]</scope>
</reference>
<reference key="20">
    <citation type="journal article" date="2017" name="Nat. Struct. Mol. Biol.">
        <title>Site-specific mapping of the human SUMO proteome reveals co-modification with phosphorylation.</title>
        <authorList>
            <person name="Hendriks I.A."/>
            <person name="Lyon D."/>
            <person name="Young C."/>
            <person name="Jensen L.J."/>
            <person name="Vertegaal A.C."/>
            <person name="Nielsen M.L."/>
        </authorList>
    </citation>
    <scope>SUMOYLATION [LARGE SCALE ANALYSIS] AT LYS-6 AND LYS-8</scope>
    <scope>IDENTIFICATION BY MASS SPECTROMETRY [LARGE SCALE ANALYSIS]</scope>
</reference>
<reference key="21">
    <citation type="journal article" date="1999" name="Cell">
        <title>Crystal structures of two Sm protein complexes and their implications for the assembly of the spliceosomal snRNPs.</title>
        <authorList>
            <person name="Kambach C."/>
            <person name="Walke S."/>
            <person name="Young R."/>
            <person name="Avis J.M."/>
            <person name="de la Fortelle E."/>
            <person name="Raker V.A."/>
            <person name="Luehrmann R."/>
            <person name="Li J."/>
            <person name="Nagai K."/>
        </authorList>
    </citation>
    <scope>X-RAY CRYSTALLOGRAPHY (2.5 ANGSTROMS) OF 26-118 IN COMPLEX WITH SNRPD1</scope>
    <scope>SUBUNIT</scope>
</reference>
<reference key="22">
    <citation type="journal article" date="2009" name="Nature">
        <title>Crystal structure of human spliceosomal U1 snRNP at 5.5 A resolution.</title>
        <authorList>
            <person name="Pomeranz Krummel D.A."/>
            <person name="Oubridge C."/>
            <person name="Leung A.K."/>
            <person name="Li J."/>
            <person name="Nagai K."/>
        </authorList>
    </citation>
    <scope>X-RAY CRYSTALLOGRAPHY (5.49 ANGSTROMS) IN SPLICEOSOMAL U1 SNRNP</scope>
    <scope>SUBUNIT</scope>
    <scope>FUNCTION</scope>
</reference>
<reference evidence="30" key="23">
    <citation type="journal article" date="2011" name="Cell">
        <title>Structure of a key intermediate of the SMN complex reveals Gemin2's crucial function in snRNP assembly.</title>
        <authorList>
            <person name="Zhang R."/>
            <person name="So B.R."/>
            <person name="Li P."/>
            <person name="Yong J."/>
            <person name="Glisovic T."/>
            <person name="Wan L."/>
            <person name="Dreyfuss G."/>
        </authorList>
    </citation>
    <scope>X-RAY CRYSTALLOGRAPHY (2.50 ANGSTROMS) IN COMPLEX WITH SNRPD1; SNRPE; SNRPF; SNRPG; SMN1 AND GEMIN2</scope>
    <scope>INTERACTION WITH SNRPD1; GEMIN2 AND SNRPF</scope>
</reference>
<reference key="24">
    <citation type="journal article" date="2011" name="Nature">
        <title>Structure of the spliceosomal U4 snRNP core domain and its implication for snRNP biogenesis.</title>
        <authorList>
            <person name="Leung A.K."/>
            <person name="Nagai K."/>
            <person name="Li J."/>
        </authorList>
    </citation>
    <scope>X-RAY CRYSTALLOGRAPHY (3.60 ANGSTROMS) IN SPLICEOSOMAL CORE U4 SNRNP</scope>
    <scope>SUBUNIT</scope>
</reference>
<reference key="25">
    <citation type="journal article" date="2013" name="Mol. Cell">
        <title>Structural basis of assembly chaperone-mediated snRNP formation.</title>
        <authorList>
            <person name="Grimm C."/>
            <person name="Chari A."/>
            <person name="Pelz J.P."/>
            <person name="Kuper J."/>
            <person name="Kisker C."/>
            <person name="Diederichs K."/>
            <person name="Stark H."/>
            <person name="Schindelin H."/>
            <person name="Fischer U."/>
        </authorList>
    </citation>
    <scope>X-RAY CRYSTALLOGRAPHY (1.90 ANGSTROMS) IN 6S PICLN-SM COMPLEX</scope>
    <scope>IDENTIFICATION IN 6S PICLN-SM COMPLEX</scope>
    <scope>FUNCTION IN CORE U1 SNRNP BIOGENESIS</scope>
</reference>
<reference evidence="26" key="26">
    <citation type="journal article" date="2015" name="Elife">
        <title>Crystal structure of human U1 snRNP, a small nuclear ribonucleoprotein particle, reveals the mechanism of 5' splice site recognition.</title>
        <authorList>
            <person name="Kondo Y."/>
            <person name="Oubridge C."/>
            <person name="van Roon A.M."/>
            <person name="Nagai K."/>
        </authorList>
    </citation>
    <scope>X-RAY CRYSTALLOGRAPHY (3.30 ANGSTROMS)</scope>
    <scope>SUBUNIT</scope>
</reference>
<reference evidence="25" key="27">
    <citation type="journal article" date="2016" name="Science">
        <title>Molecular architecture of the human U4/U6.U5 tri-snRNP.</title>
        <authorList>
            <person name="Agafonov D.E."/>
            <person name="Kastner B."/>
            <person name="Dybkov O."/>
            <person name="Hofele R.V."/>
            <person name="Liu W.T."/>
            <person name="Urlaub H."/>
            <person name="Luhrmann R."/>
            <person name="Stark H."/>
        </authorList>
    </citation>
    <scope>STRUCTURE BY ELECTRON MICROSCOPY (7.00 ANGSTROMS)</scope>
    <scope>FUNCTION</scope>
    <scope>SUBCELLULAR LOCATION</scope>
    <scope>SUBUNIT</scope>
    <scope>IDENTIFICATION BY MASS SPECTROMETRY</scope>
</reference>
<reference evidence="29" key="28">
    <citation type="journal article" date="2017" name="Cell">
        <title>An Atomic Structure of the Human Spliceosome.</title>
        <authorList>
            <person name="Zhang X."/>
            <person name="Yan C."/>
            <person name="Hang J."/>
            <person name="Finci L.I."/>
            <person name="Lei J."/>
            <person name="Shi Y."/>
        </authorList>
    </citation>
    <scope>STRUCTURE BY ELECTRON MICROSCOPY (3.60 ANGSTROMS)</scope>
    <scope>FUNCTION</scope>
    <scope>SUBCELLULAR LOCATION</scope>
    <scope>SUBUNIT</scope>
</reference>
<reference evidence="28" key="29">
    <citation type="journal article" date="2017" name="Cell">
        <title>Cryo-EM Structure of a Pre-catalytic Human Spliceosome Primed for Activation.</title>
        <authorList>
            <person name="Bertram K."/>
            <person name="Agafonov D.E."/>
            <person name="Dybkov O."/>
            <person name="Haselbach D."/>
            <person name="Leelaram M.N."/>
            <person name="Will C.L."/>
            <person name="Urlaub H."/>
            <person name="Kastner B."/>
            <person name="Luhrmann R."/>
            <person name="Stark H."/>
        </authorList>
    </citation>
    <scope>STRUCTURE BY ELECTRON MICROSCOPY (4.50 ANGSTROMS)</scope>
    <scope>IDENTIFICATION BY MASS SPECTROMETRY</scope>
    <scope>FUNCTION</scope>
    <scope>SUBCELLULAR LOCATION</scope>
    <scope>SUBUNIT</scope>
</reference>
<reference evidence="27" key="30">
    <citation type="journal article" date="2017" name="Nature">
        <title>Cryo-EM structure of a human spliceosome activated for step 2 of splicing.</title>
        <authorList>
            <person name="Bertram K."/>
            <person name="Agafonov D.E."/>
            <person name="Liu W.T."/>
            <person name="Dybkov O."/>
            <person name="Will C.L."/>
            <person name="Hartmuth K."/>
            <person name="Urlaub H."/>
            <person name="Kastner B."/>
            <person name="Stark H."/>
            <person name="Luhrmann R."/>
        </authorList>
    </citation>
    <scope>STRUCTURE BY ELECTRON MICROSCOPY (5.90 ANGSTROMS)</scope>
    <scope>FUNCTION</scope>
    <scope>SUBCELLULAR LOCATION</scope>
    <scope>SUBUNIT</scope>
    <scope>IDENTIFICATION BY MASS SPECTROMETRY</scope>
</reference>
<reference evidence="31 32 33" key="31">
    <citation type="journal article" date="2020" name="Nucleic Acids Res.">
        <title>Negative cooperativity between Gemin2 and RNA provides insights into RNA selection and the SMN complex's release in snRNP assembly.</title>
        <authorList>
            <person name="Yi H."/>
            <person name="Mu L."/>
            <person name="Shen C."/>
            <person name="Kong X."/>
            <person name="Wang Y."/>
            <person name="Hou Y."/>
            <person name="Zhang R."/>
        </authorList>
    </citation>
    <scope>X-RAY CRYSTALLOGRAPHY (3.12 ANGSTROMS) IN COMPLEX WITH GEMIN2; SNRPD1; SNRPE; SNRPF; SNRPG AND SMN1</scope>
    <scope>INTERACTION WITH GEMIN2; SNRPD1 AND SNRPF</scope>
</reference>
<reference evidence="34" key="32">
    <citation type="journal article" date="2020" name="Nature">
        <title>Molecular architecture of the human 17S U2 snRNP.</title>
        <authorList>
            <person name="Zhang Z."/>
            <person name="Will C.L."/>
            <person name="Bertram K."/>
            <person name="Dybkov O."/>
            <person name="Hartmuth K."/>
            <person name="Agafonov D.E."/>
            <person name="Hofele R."/>
            <person name="Urlaub H."/>
            <person name="Kastner B."/>
            <person name="Luehrmann R."/>
            <person name="Stark H."/>
        </authorList>
    </citation>
    <scope>STRUCTURE BY ELECTRON MICROSCOPY (4.10 ANGSTROMS) IN COMPLEX WITH THE 17S U2 SNRNP COMPLEX</scope>
    <scope>FUNCTION</scope>
    <scope>IDENTIFICATION IN THE 17S U2 SNRNP COMPLEX</scope>
</reference>
<reference evidence="35" key="33">
    <citation type="journal article" date="2021" name="Science">
        <title>Structure of the activated human minor spliceosome.</title>
        <authorList>
            <person name="Bai R."/>
            <person name="Wan R."/>
            <person name="Wang L."/>
            <person name="Xu K."/>
            <person name="Zhang Q."/>
            <person name="Lei J."/>
            <person name="Shi Y."/>
        </authorList>
    </citation>
    <scope>STRUCTURE BY ELECTRON MICROSCOPY (2.89 ANGSTROMS)</scope>
    <scope>SUBUNIT</scope>
</reference>
<reference evidence="36" key="34">
    <citation type="journal article" date="2023" name="Nat. Commun.">
        <title>Mechanisms of the RNA helicases DDX42 and DDX46 in human U2 snRNP assembly.</title>
        <authorList>
            <person name="Yang F."/>
            <person name="Bian T."/>
            <person name="Zhan X."/>
            <person name="Chen Z."/>
            <person name="Xing Z."/>
            <person name="Larsen N.A."/>
            <person name="Zhang X."/>
            <person name="Shi Y."/>
        </authorList>
    </citation>
    <scope>STRUCTURE BY ELECTRON MICROSCOPY (2.70 ANGSTROMS) IN COMPLEX WITH THE 17S U2 SNRNP COMPLEX</scope>
    <scope>IDENTIFICATION IN THE 17S U2 SNRNP COMPLEX</scope>
</reference>
<gene>
    <name type="primary">SNRPD2</name>
    <name type="synonym">SNRPD1</name>
</gene>
<name>SMD2_HUMAN</name>
<proteinExistence type="evidence at protein level"/>
<sequence>MSLLNKPKSEMTPEELQKREEEEFNTGPLSVLTQSVKNNTQVLINCRNNKKLLGRVKAFDRHCNMVLENVKEMWTEVPKSGKGKKKSKPVNKDRYISKMFLRGDSVIVVLRNPLIAGK</sequence>
<dbReference type="EMBL" id="U15008">
    <property type="protein sequence ID" value="AAC13776.1"/>
    <property type="molecule type" value="mRNA"/>
</dbReference>
<dbReference type="EMBL" id="AK291912">
    <property type="protein sequence ID" value="BAF84601.1"/>
    <property type="molecule type" value="mRNA"/>
</dbReference>
<dbReference type="EMBL" id="AC007191">
    <property type="protein sequence ID" value="AAD22673.1"/>
    <property type="molecule type" value="Genomic_DNA"/>
</dbReference>
<dbReference type="EMBL" id="CH471126">
    <property type="protein sequence ID" value="EAW57373.1"/>
    <property type="molecule type" value="Genomic_DNA"/>
</dbReference>
<dbReference type="EMBL" id="CH471126">
    <property type="protein sequence ID" value="EAW57374.1"/>
    <property type="molecule type" value="Genomic_DNA"/>
</dbReference>
<dbReference type="EMBL" id="BC000486">
    <property type="protein sequence ID" value="AAH00486.1"/>
    <property type="molecule type" value="mRNA"/>
</dbReference>
<dbReference type="EMBL" id="BC001930">
    <property type="protein sequence ID" value="AAH01930.1"/>
    <property type="molecule type" value="mRNA"/>
</dbReference>
<dbReference type="EMBL" id="BU531743">
    <property type="status" value="NOT_ANNOTATED_CDS"/>
    <property type="molecule type" value="mRNA"/>
</dbReference>
<dbReference type="CCDS" id="CCDS33053.1">
    <molecule id="P62316-1"/>
</dbReference>
<dbReference type="CCDS" id="CCDS54281.1">
    <molecule id="P62316-2"/>
</dbReference>
<dbReference type="PIR" id="I38861">
    <property type="entry name" value="I38861"/>
</dbReference>
<dbReference type="RefSeq" id="NP_001356680.1">
    <molecule id="P62316-2"/>
    <property type="nucleotide sequence ID" value="NM_001369751.1"/>
</dbReference>
<dbReference type="RefSeq" id="NP_001371576.1">
    <molecule id="P62316-1"/>
    <property type="nucleotide sequence ID" value="NM_001384647.1"/>
</dbReference>
<dbReference type="RefSeq" id="NP_004588.1">
    <molecule id="P62316-1"/>
    <property type="nucleotide sequence ID" value="NM_004597.6"/>
</dbReference>
<dbReference type="RefSeq" id="NP_808210.2">
    <molecule id="P62316-2"/>
    <property type="nucleotide sequence ID" value="NM_177542.3"/>
</dbReference>
<dbReference type="PDB" id="1B34">
    <property type="method" value="X-ray"/>
    <property type="resolution" value="2.50 A"/>
    <property type="chains" value="B=1-118"/>
</dbReference>
<dbReference type="PDB" id="3CW1">
    <property type="method" value="X-ray"/>
    <property type="resolution" value="5.49 A"/>
    <property type="chains" value="C/P/Q/R=1-118"/>
</dbReference>
<dbReference type="PDB" id="3JCR">
    <property type="method" value="EM"/>
    <property type="resolution" value="7.00 A"/>
    <property type="chains" value="Q/q=1-118"/>
</dbReference>
<dbReference type="PDB" id="3PGW">
    <property type="method" value="X-ray"/>
    <property type="resolution" value="4.40 A"/>
    <property type="chains" value="V/Y=1-118"/>
</dbReference>
<dbReference type="PDB" id="4F7U">
    <property type="method" value="X-ray"/>
    <property type="resolution" value="1.90 A"/>
    <property type="chains" value="B/D=1-118"/>
</dbReference>
<dbReference type="PDB" id="4PJO">
    <property type="method" value="X-ray"/>
    <property type="resolution" value="3.30 A"/>
    <property type="chains" value="D/R/d/r=1-118"/>
</dbReference>
<dbReference type="PDB" id="4V98">
    <property type="method" value="X-ray"/>
    <property type="resolution" value="3.10 A"/>
    <property type="chains" value="AB/AJ/AR/AZ/Ah/Ap/Ax/BB/BJ/BR/BZ/Bh/Bp/Bx/CB/CJ/CR/CZ/Ch/Cp=1-118"/>
</dbReference>
<dbReference type="PDB" id="4WZJ">
    <property type="method" value="X-ray"/>
    <property type="resolution" value="3.60 A"/>
    <property type="chains" value="AC/AJ/AQ/BC/BJ/BQ/CC/CJ/CQ/DC/DJ/DQ=1-118"/>
</dbReference>
<dbReference type="PDB" id="5MQF">
    <property type="method" value="EM"/>
    <property type="resolution" value="5.90 A"/>
    <property type="chains" value="a/h=1-118"/>
</dbReference>
<dbReference type="PDB" id="5O9Z">
    <property type="method" value="EM"/>
    <property type="resolution" value="4.50 A"/>
    <property type="chains" value="S/a/h=1-118"/>
</dbReference>
<dbReference type="PDB" id="5XJC">
    <property type="method" value="EM"/>
    <property type="resolution" value="3.60 A"/>
    <property type="chains" value="d/k=1-118"/>
</dbReference>
<dbReference type="PDB" id="5XJL">
    <property type="method" value="X-ray"/>
    <property type="resolution" value="2.50 A"/>
    <property type="chains" value="B=1-118"/>
</dbReference>
<dbReference type="PDB" id="5XJQ">
    <property type="method" value="X-ray"/>
    <property type="resolution" value="3.28 A"/>
    <property type="chains" value="B=1-118"/>
</dbReference>
<dbReference type="PDB" id="5XJR">
    <property type="method" value="X-ray"/>
    <property type="resolution" value="3.12 A"/>
    <property type="chains" value="B=1-118"/>
</dbReference>
<dbReference type="PDB" id="5XJS">
    <property type="method" value="X-ray"/>
    <property type="resolution" value="3.38 A"/>
    <property type="chains" value="B=1-118"/>
</dbReference>
<dbReference type="PDB" id="5XJT">
    <property type="method" value="X-ray"/>
    <property type="resolution" value="2.92 A"/>
    <property type="chains" value="B=1-118"/>
</dbReference>
<dbReference type="PDB" id="5XJU">
    <property type="method" value="X-ray"/>
    <property type="resolution" value="2.58 A"/>
    <property type="chains" value="B=1-118"/>
</dbReference>
<dbReference type="PDB" id="5YZG">
    <property type="method" value="EM"/>
    <property type="resolution" value="4.10 A"/>
    <property type="chains" value="d/k=1-118"/>
</dbReference>
<dbReference type="PDB" id="5Z56">
    <property type="method" value="EM"/>
    <property type="resolution" value="5.10 A"/>
    <property type="chains" value="d/k=1-118"/>
</dbReference>
<dbReference type="PDB" id="5Z57">
    <property type="method" value="EM"/>
    <property type="resolution" value="6.50 A"/>
    <property type="chains" value="d/k=1-118"/>
</dbReference>
<dbReference type="PDB" id="5Z58">
    <property type="method" value="EM"/>
    <property type="resolution" value="4.90 A"/>
    <property type="chains" value="d/k=1-118"/>
</dbReference>
<dbReference type="PDB" id="6AH0">
    <property type="method" value="EM"/>
    <property type="resolution" value="5.70 A"/>
    <property type="chains" value="P/a/k=1-118"/>
</dbReference>
<dbReference type="PDB" id="6AHD">
    <property type="method" value="EM"/>
    <property type="resolution" value="3.80 A"/>
    <property type="chains" value="P/c/k=1-118"/>
</dbReference>
<dbReference type="PDB" id="6FF7">
    <property type="method" value="EM"/>
    <property type="resolution" value="4.50 A"/>
    <property type="chains" value="a/h=1-118"/>
</dbReference>
<dbReference type="PDB" id="6ICZ">
    <property type="method" value="EM"/>
    <property type="resolution" value="3.00 A"/>
    <property type="chains" value="d/k=1-118"/>
</dbReference>
<dbReference type="PDB" id="6ID0">
    <property type="method" value="EM"/>
    <property type="resolution" value="2.90 A"/>
    <property type="chains" value="d/k=1-118"/>
</dbReference>
<dbReference type="PDB" id="6ID1">
    <property type="method" value="EM"/>
    <property type="resolution" value="2.86 A"/>
    <property type="chains" value="d/k=1-118"/>
</dbReference>
<dbReference type="PDB" id="6QDV">
    <property type="method" value="EM"/>
    <property type="resolution" value="3.30 A"/>
    <property type="chains" value="j/m=1-118"/>
</dbReference>
<dbReference type="PDB" id="6QW6">
    <property type="method" value="EM"/>
    <property type="resolution" value="2.92 A"/>
    <property type="chains" value="42/52=1-118"/>
</dbReference>
<dbReference type="PDB" id="6QX9">
    <property type="method" value="EM"/>
    <property type="resolution" value="3.28 A"/>
    <property type="chains" value="12/22/42/52=1-118"/>
</dbReference>
<dbReference type="PDB" id="6Y53">
    <property type="method" value="EM"/>
    <property type="resolution" value="7.10 A"/>
    <property type="chains" value="h=1-118"/>
</dbReference>
<dbReference type="PDB" id="6Y5Q">
    <property type="method" value="EM"/>
    <property type="resolution" value="7.10 A"/>
    <property type="chains" value="h=1-118"/>
</dbReference>
<dbReference type="PDB" id="7A5P">
    <property type="method" value="EM"/>
    <property type="resolution" value="5.00 A"/>
    <property type="chains" value="d/h=1-118"/>
</dbReference>
<dbReference type="PDB" id="7ABG">
    <property type="method" value="EM"/>
    <property type="resolution" value="7.80 A"/>
    <property type="chains" value="a/h=1-118"/>
</dbReference>
<dbReference type="PDB" id="7ABI">
    <property type="method" value="EM"/>
    <property type="resolution" value="8.00 A"/>
    <property type="chains" value="a/h=1-118"/>
</dbReference>
<dbReference type="PDB" id="7B0Y">
    <property type="method" value="EM"/>
    <property type="resolution" value="3.60 A"/>
    <property type="chains" value="e=1-118"/>
</dbReference>
<dbReference type="PDB" id="7DVQ">
    <property type="method" value="EM"/>
    <property type="resolution" value="2.89 A"/>
    <property type="chains" value="d/k=1-118"/>
</dbReference>
<dbReference type="PDB" id="7EVO">
    <property type="method" value="EM"/>
    <property type="resolution" value="2.50 A"/>
    <property type="chains" value="a=1-118"/>
</dbReference>
<dbReference type="PDB" id="7QTT">
    <property type="method" value="EM"/>
    <property type="resolution" value="3.10 A"/>
    <property type="chains" value="l=1-118"/>
</dbReference>
<dbReference type="PDB" id="7VPX">
    <property type="method" value="EM"/>
    <property type="resolution" value="3.00 A"/>
    <property type="chains" value="a/i=1-118"/>
</dbReference>
<dbReference type="PDB" id="7W59">
    <property type="method" value="EM"/>
    <property type="resolution" value="3.60 A"/>
    <property type="chains" value="d/k=1-118"/>
</dbReference>
<dbReference type="PDB" id="7W5A">
    <property type="method" value="EM"/>
    <property type="resolution" value="3.60 A"/>
    <property type="chains" value="d/k=1-118"/>
</dbReference>
<dbReference type="PDB" id="7W5B">
    <property type="method" value="EM"/>
    <property type="resolution" value="4.30 A"/>
    <property type="chains" value="d/k=1-118"/>
</dbReference>
<dbReference type="PDB" id="8C6J">
    <property type="method" value="EM"/>
    <property type="resolution" value="2.80 A"/>
    <property type="chains" value="a/m=1-118"/>
</dbReference>
<dbReference type="PDB" id="8CH6">
    <property type="method" value="EM"/>
    <property type="resolution" value="5.90 A"/>
    <property type="chains" value="4/l=1-118"/>
</dbReference>
<dbReference type="PDB" id="8H6E">
    <property type="method" value="EM"/>
    <property type="resolution" value="3.20 A"/>
    <property type="chains" value="2c/4c/5c=1-118"/>
</dbReference>
<dbReference type="PDB" id="8H6J">
    <property type="method" value="EM"/>
    <property type="resolution" value="3.25 A"/>
    <property type="chains" value="2c/4c/5c=1-118"/>
</dbReference>
<dbReference type="PDB" id="8H6K">
    <property type="method" value="EM"/>
    <property type="resolution" value="2.70 A"/>
    <property type="chains" value="2c/4c/5c=1-118"/>
</dbReference>
<dbReference type="PDB" id="8H6L">
    <property type="method" value="EM"/>
    <property type="resolution" value="2.60 A"/>
    <property type="chains" value="2c/4c/5c=1-118"/>
</dbReference>
<dbReference type="PDB" id="8HK1">
    <property type="method" value="EM"/>
    <property type="resolution" value="2.70 A"/>
    <property type="chains" value="a=1-118"/>
</dbReference>
<dbReference type="PDB" id="8I0P">
    <property type="method" value="EM"/>
    <property type="resolution" value="3.40 A"/>
    <property type="chains" value="c/h=1-118"/>
</dbReference>
<dbReference type="PDB" id="8I0R">
    <property type="method" value="EM"/>
    <property type="resolution" value="3.00 A"/>
    <property type="chains" value="c/h=1-118"/>
</dbReference>
<dbReference type="PDB" id="8I0S">
    <property type="method" value="EM"/>
    <property type="resolution" value="4.20 A"/>
    <property type="chains" value="c/h=1-118"/>
</dbReference>
<dbReference type="PDB" id="8I0T">
    <property type="method" value="EM"/>
    <property type="resolution" value="3.00 A"/>
    <property type="chains" value="c/h=1-118"/>
</dbReference>
<dbReference type="PDB" id="8I0U">
    <property type="method" value="EM"/>
    <property type="resolution" value="3.30 A"/>
    <property type="chains" value="c/h=1-118"/>
</dbReference>
<dbReference type="PDB" id="8I0V">
    <property type="method" value="EM"/>
    <property type="resolution" value="3.00 A"/>
    <property type="chains" value="c/h=1-118"/>
</dbReference>
<dbReference type="PDB" id="8I0W">
    <property type="method" value="EM"/>
    <property type="resolution" value="3.40 A"/>
    <property type="chains" value="c/k=1-118"/>
</dbReference>
<dbReference type="PDB" id="8Q7Q">
    <property type="method" value="EM"/>
    <property type="resolution" value="3.20 A"/>
    <property type="chains" value="c=1-118"/>
</dbReference>
<dbReference type="PDB" id="8Q7V">
    <property type="method" value="EM"/>
    <property type="resolution" value="3.80 A"/>
    <property type="chains" value="c=1-118"/>
</dbReference>
<dbReference type="PDB" id="8Q7W">
    <property type="method" value="EM"/>
    <property type="resolution" value="3.90 A"/>
    <property type="chains" value="c=1-118"/>
</dbReference>
<dbReference type="PDB" id="8Q7X">
    <property type="method" value="EM"/>
    <property type="resolution" value="4.60 A"/>
    <property type="chains" value="c=1-118"/>
</dbReference>
<dbReference type="PDB" id="8Q91">
    <property type="method" value="EM"/>
    <property type="resolution" value="3.10 A"/>
    <property type="chains" value="j=1-118"/>
</dbReference>
<dbReference type="PDB" id="8QO9">
    <property type="method" value="EM"/>
    <property type="resolution" value="5.29 A"/>
    <property type="chains" value="22/42/52=1-118"/>
</dbReference>
<dbReference type="PDB" id="8QXD">
    <property type="method" value="EM"/>
    <property type="resolution" value="9.60 A"/>
    <property type="chains" value="22/42/52=1-118"/>
</dbReference>
<dbReference type="PDB" id="8QZS">
    <property type="method" value="EM"/>
    <property type="resolution" value="4.10 A"/>
    <property type="chains" value="22/42/52=1-118"/>
</dbReference>
<dbReference type="PDB" id="8R08">
    <property type="method" value="EM"/>
    <property type="resolution" value="6.10 A"/>
    <property type="chains" value="12/22/42/52=1-118"/>
</dbReference>
<dbReference type="PDB" id="8R09">
    <property type="method" value="EM"/>
    <property type="resolution" value="4.30 A"/>
    <property type="chains" value="22/42/52=1-118"/>
</dbReference>
<dbReference type="PDB" id="8R0A">
    <property type="method" value="EM"/>
    <property type="resolution" value="5.80 A"/>
    <property type="chains" value="22/42/52=1-118"/>
</dbReference>
<dbReference type="PDB" id="8R0B">
    <property type="method" value="EM"/>
    <property type="resolution" value="4.40 A"/>
    <property type="chains" value="22/42/52=1-118"/>
</dbReference>
<dbReference type="PDB" id="8R7N">
    <property type="method" value="EM"/>
    <property type="resolution" value="3.40 A"/>
    <property type="chains" value="i=1-118"/>
</dbReference>
<dbReference type="PDB" id="8RC0">
    <property type="method" value="EM"/>
    <property type="resolution" value="3.20 A"/>
    <property type="chains" value="j=1-118"/>
</dbReference>
<dbReference type="PDB" id="8RM5">
    <property type="method" value="EM"/>
    <property type="resolution" value="6.90 A"/>
    <property type="chains" value="22/42/52=1-118"/>
</dbReference>
<dbReference type="PDB" id="8RO2">
    <property type="method" value="EM"/>
    <property type="resolution" value="3.50 A"/>
    <property type="chains" value="d=1-118"/>
</dbReference>
<dbReference type="PDB" id="8Y6O">
    <property type="method" value="EM"/>
    <property type="resolution" value="3.38 A"/>
    <property type="chains" value="c/j/q=1-118"/>
</dbReference>
<dbReference type="PDB" id="8Y7E">
    <property type="method" value="EM"/>
    <property type="resolution" value="4.66 A"/>
    <property type="chains" value="k=1-118"/>
</dbReference>
<dbReference type="PDB" id="9FMD">
    <property type="method" value="EM"/>
    <property type="resolution" value="3.30 A"/>
    <property type="chains" value="d/k=1-118"/>
</dbReference>
<dbReference type="PDB" id="9GBW">
    <property type="method" value="EM"/>
    <property type="resolution" value="3.50 A"/>
    <property type="chains" value="i=1-118"/>
</dbReference>
<dbReference type="PDB" id="9GC0">
    <property type="method" value="EM"/>
    <property type="resolution" value="3.20 A"/>
    <property type="chains" value="i=1-118"/>
</dbReference>
<dbReference type="PDB" id="9GCL">
    <property type="method" value="EM"/>
    <property type="resolution" value="3.00 A"/>
    <property type="chains" value="i=1-118"/>
</dbReference>
<dbReference type="PDBsum" id="1B34"/>
<dbReference type="PDBsum" id="3CW1"/>
<dbReference type="PDBsum" id="3JCR"/>
<dbReference type="PDBsum" id="3PGW"/>
<dbReference type="PDBsum" id="4F7U"/>
<dbReference type="PDBsum" id="4PJO"/>
<dbReference type="PDBsum" id="4V98"/>
<dbReference type="PDBsum" id="4WZJ"/>
<dbReference type="PDBsum" id="5MQF"/>
<dbReference type="PDBsum" id="5O9Z"/>
<dbReference type="PDBsum" id="5XJC"/>
<dbReference type="PDBsum" id="5XJL"/>
<dbReference type="PDBsum" id="5XJQ"/>
<dbReference type="PDBsum" id="5XJR"/>
<dbReference type="PDBsum" id="5XJS"/>
<dbReference type="PDBsum" id="5XJT"/>
<dbReference type="PDBsum" id="5XJU"/>
<dbReference type="PDBsum" id="5YZG"/>
<dbReference type="PDBsum" id="5Z56"/>
<dbReference type="PDBsum" id="5Z57"/>
<dbReference type="PDBsum" id="5Z58"/>
<dbReference type="PDBsum" id="6AH0"/>
<dbReference type="PDBsum" id="6AHD"/>
<dbReference type="PDBsum" id="6FF7"/>
<dbReference type="PDBsum" id="6ICZ"/>
<dbReference type="PDBsum" id="6ID0"/>
<dbReference type="PDBsum" id="6ID1"/>
<dbReference type="PDBsum" id="6QDV"/>
<dbReference type="PDBsum" id="6QW6"/>
<dbReference type="PDBsum" id="6QX9"/>
<dbReference type="PDBsum" id="6Y53"/>
<dbReference type="PDBsum" id="6Y5Q"/>
<dbReference type="PDBsum" id="7A5P"/>
<dbReference type="PDBsum" id="7ABG"/>
<dbReference type="PDBsum" id="7ABI"/>
<dbReference type="PDBsum" id="7B0Y"/>
<dbReference type="PDBsum" id="7DVQ"/>
<dbReference type="PDBsum" id="7EVO"/>
<dbReference type="PDBsum" id="7QTT"/>
<dbReference type="PDBsum" id="7VPX"/>
<dbReference type="PDBsum" id="7W59"/>
<dbReference type="PDBsum" id="7W5A"/>
<dbReference type="PDBsum" id="7W5B"/>
<dbReference type="PDBsum" id="8C6J"/>
<dbReference type="PDBsum" id="8CH6"/>
<dbReference type="PDBsum" id="8H6E"/>
<dbReference type="PDBsum" id="8H6J"/>
<dbReference type="PDBsum" id="8H6K"/>
<dbReference type="PDBsum" id="8H6L"/>
<dbReference type="PDBsum" id="8HK1"/>
<dbReference type="PDBsum" id="8I0P"/>
<dbReference type="PDBsum" id="8I0R"/>
<dbReference type="PDBsum" id="8I0S"/>
<dbReference type="PDBsum" id="8I0T"/>
<dbReference type="PDBsum" id="8I0U"/>
<dbReference type="PDBsum" id="8I0V"/>
<dbReference type="PDBsum" id="8I0W"/>
<dbReference type="PDBsum" id="8Q7Q"/>
<dbReference type="PDBsum" id="8Q7V"/>
<dbReference type="PDBsum" id="8Q7W"/>
<dbReference type="PDBsum" id="8Q7X"/>
<dbReference type="PDBsum" id="8Q91"/>
<dbReference type="PDBsum" id="8QO9"/>
<dbReference type="PDBsum" id="8QXD"/>
<dbReference type="PDBsum" id="8QZS"/>
<dbReference type="PDBsum" id="8R08"/>
<dbReference type="PDBsum" id="8R09"/>
<dbReference type="PDBsum" id="8R0A"/>
<dbReference type="PDBsum" id="8R0B"/>
<dbReference type="PDBsum" id="8R7N"/>
<dbReference type="PDBsum" id="8RC0"/>
<dbReference type="PDBsum" id="8RM5"/>
<dbReference type="PDBsum" id="8RO2"/>
<dbReference type="PDBsum" id="8Y6O"/>
<dbReference type="PDBsum" id="8Y7E"/>
<dbReference type="PDBsum" id="9FMD"/>
<dbReference type="PDBsum" id="9GBW"/>
<dbReference type="PDBsum" id="9GC0"/>
<dbReference type="PDBsum" id="9GCL"/>
<dbReference type="EMDB" id="EMD-10689"/>
<dbReference type="EMDB" id="EMD-11695"/>
<dbReference type="EMDB" id="EMD-11697"/>
<dbReference type="EMDB" id="EMD-11972"/>
<dbReference type="EMDB" id="EMD-14146"/>
<dbReference type="EMDB" id="EMD-16452"/>
<dbReference type="EMDB" id="EMD-16658"/>
<dbReference type="EMDB" id="EMD-18229"/>
<dbReference type="EMDB" id="EMD-18234"/>
<dbReference type="EMDB" id="EMD-18235"/>
<dbReference type="EMDB" id="EMD-18237"/>
<dbReference type="EMDB" id="EMD-18267"/>
<dbReference type="EMDB" id="EMD-18529"/>
<dbReference type="EMDB" id="EMD-18718"/>
<dbReference type="EMDB" id="EMD-18781"/>
<dbReference type="EMDB" id="EMD-18786"/>
<dbReference type="EMDB" id="EMD-18787"/>
<dbReference type="EMDB" id="EMD-18788"/>
<dbReference type="EMDB" id="EMD-18789"/>
<dbReference type="EMDB" id="EMD-18984"/>
<dbReference type="EMDB" id="EMD-19041"/>
<dbReference type="EMDB" id="EMD-19349"/>
<dbReference type="EMDB" id="EMD-19399"/>
<dbReference type="EMDB" id="EMD-30875"/>
<dbReference type="EMDB" id="EMD-31334"/>
<dbReference type="EMDB" id="EMD-32074"/>
<dbReference type="EMDB" id="EMD-32317"/>
<dbReference type="EMDB" id="EMD-32319"/>
<dbReference type="EMDB" id="EMD-32321"/>
<dbReference type="EMDB" id="EMD-34500"/>
<dbReference type="EMDB" id="EMD-34505"/>
<dbReference type="EMDB" id="EMD-34507"/>
<dbReference type="EMDB" id="EMD-34508"/>
<dbReference type="EMDB" id="EMD-34841"/>
<dbReference type="EMDB" id="EMD-35105"/>
<dbReference type="EMDB" id="EMD-35107"/>
<dbReference type="EMDB" id="EMD-35108"/>
<dbReference type="EMDB" id="EMD-35109"/>
<dbReference type="EMDB" id="EMD-35110"/>
<dbReference type="EMDB" id="EMD-35111"/>
<dbReference type="EMDB" id="EMD-35113"/>
<dbReference type="EMDB" id="EMD-3545"/>
<dbReference type="EMDB" id="EMD-3766"/>
<dbReference type="EMDB" id="EMD-38993"/>
<dbReference type="EMDB" id="EMD-39013"/>
<dbReference type="EMDB" id="EMD-4525"/>
<dbReference type="EMDB" id="EMD-4658"/>
<dbReference type="EMDB" id="EMD-4665"/>
<dbReference type="EMDB" id="EMD-51223"/>
<dbReference type="EMDB" id="EMD-51226"/>
<dbReference type="EMDB" id="EMD-51233"/>
<dbReference type="EMDB" id="EMD-6721"/>
<dbReference type="EMDB" id="EMD-6864"/>
<dbReference type="EMDB" id="EMD-6889"/>
<dbReference type="EMDB" id="EMD-6890"/>
<dbReference type="EMDB" id="EMD-6891"/>
<dbReference type="EMDB" id="EMD-9621"/>
<dbReference type="EMDB" id="EMD-9624"/>
<dbReference type="EMDB" id="EMD-9645"/>
<dbReference type="EMDB" id="EMD-9646"/>
<dbReference type="EMDB" id="EMD-9647"/>
<dbReference type="SMR" id="P62316"/>
<dbReference type="BioGRID" id="112517">
    <property type="interactions" value="408"/>
</dbReference>
<dbReference type="ComplexPortal" id="CPX-2391">
    <property type="entry name" value="U4/U6.U5 small nuclear ribonucleoprotein complex"/>
</dbReference>
<dbReference type="ComplexPortal" id="CPX-2392">
    <property type="entry name" value="U1 small nuclear ribonucleoprotein complex"/>
</dbReference>
<dbReference type="ComplexPortal" id="CPX-2539">
    <property type="entry name" value="U2 small nuclear ribonucleoprotein complex"/>
</dbReference>
<dbReference type="ComplexPortal" id="CPX-6033">
    <property type="entry name" value="Sm complex"/>
</dbReference>
<dbReference type="CORUM" id="P62316"/>
<dbReference type="DIP" id="DIP-31219N"/>
<dbReference type="FunCoup" id="P62316">
    <property type="interactions" value="3050"/>
</dbReference>
<dbReference type="IntAct" id="P62316">
    <property type="interactions" value="198"/>
</dbReference>
<dbReference type="MINT" id="P62316"/>
<dbReference type="STRING" id="9606.ENSP00000342374"/>
<dbReference type="DrugBank" id="DB11638">
    <property type="generic name" value="Artenimol"/>
</dbReference>
<dbReference type="GlyGen" id="P62316">
    <property type="glycosylation" value="3 sites, 1 N-linked glycan (1 site), 1 O-linked glycan (2 sites)"/>
</dbReference>
<dbReference type="iPTMnet" id="P62316"/>
<dbReference type="MetOSite" id="P62316"/>
<dbReference type="PhosphoSitePlus" id="P62316"/>
<dbReference type="SwissPalm" id="P62316"/>
<dbReference type="BioMuta" id="SNRPD2"/>
<dbReference type="DMDM" id="51338666"/>
<dbReference type="jPOST" id="P62316"/>
<dbReference type="MassIVE" id="P62316"/>
<dbReference type="PaxDb" id="9606-ENSP00000342374"/>
<dbReference type="PeptideAtlas" id="P62316"/>
<dbReference type="ProteomicsDB" id="57392">
    <molecule id="P62316-1"/>
</dbReference>
<dbReference type="Pumba" id="P62316"/>
<dbReference type="TopDownProteomics" id="P62316-1">
    <molecule id="P62316-1"/>
</dbReference>
<dbReference type="TopDownProteomics" id="P62316-2">
    <molecule id="P62316-2"/>
</dbReference>
<dbReference type="ABCD" id="P62316">
    <property type="antibodies" value="7 sequenced antibodies"/>
</dbReference>
<dbReference type="Antibodypedia" id="31375">
    <property type="antibodies" value="203 antibodies from 28 providers"/>
</dbReference>
<dbReference type="DNASU" id="6633"/>
<dbReference type="Ensembl" id="ENST00000342669.8">
    <molecule id="P62316-1"/>
    <property type="protein sequence ID" value="ENSP00000342374.2"/>
    <property type="gene ID" value="ENSG00000125743.11"/>
</dbReference>
<dbReference type="Ensembl" id="ENST00000391932.7">
    <molecule id="P62316-2"/>
    <property type="protein sequence ID" value="ENSP00000375798.2"/>
    <property type="gene ID" value="ENSG00000125743.11"/>
</dbReference>
<dbReference type="Ensembl" id="ENST00000587367.5">
    <molecule id="P62316-2"/>
    <property type="protein sequence ID" value="ENSP00000465952.1"/>
    <property type="gene ID" value="ENSG00000125743.11"/>
</dbReference>
<dbReference type="Ensembl" id="ENST00000588301.5">
    <molecule id="P62316-1"/>
    <property type="protein sequence ID" value="ENSP00000465216.1"/>
    <property type="gene ID" value="ENSG00000125743.11"/>
</dbReference>
<dbReference type="Ensembl" id="ENST00000588599.5">
    <molecule id="P62316-2"/>
    <property type="protein sequence ID" value="ENSP00000466152.1"/>
    <property type="gene ID" value="ENSG00000125743.11"/>
</dbReference>
<dbReference type="GeneID" id="6633"/>
<dbReference type="KEGG" id="hsa:6633"/>
<dbReference type="MANE-Select" id="ENST00000342669.8">
    <property type="protein sequence ID" value="ENSP00000342374.2"/>
    <property type="RefSeq nucleotide sequence ID" value="NM_001384647.1"/>
    <property type="RefSeq protein sequence ID" value="NP_001371576.1"/>
</dbReference>
<dbReference type="UCSC" id="uc002pcv.4">
    <molecule id="P62316-1"/>
    <property type="organism name" value="human"/>
</dbReference>
<dbReference type="AGR" id="HGNC:11159"/>
<dbReference type="CTD" id="6633"/>
<dbReference type="DisGeNET" id="6633"/>
<dbReference type="GeneCards" id="SNRPD2"/>
<dbReference type="HGNC" id="HGNC:11159">
    <property type="gene designation" value="SNRPD2"/>
</dbReference>
<dbReference type="HPA" id="ENSG00000125743">
    <property type="expression patterns" value="Low tissue specificity"/>
</dbReference>
<dbReference type="MIM" id="601061">
    <property type="type" value="gene"/>
</dbReference>
<dbReference type="neXtProt" id="NX_P62316"/>
<dbReference type="OpenTargets" id="ENSG00000125743"/>
<dbReference type="PharmGKB" id="PA36000"/>
<dbReference type="VEuPathDB" id="HostDB:ENSG00000125743"/>
<dbReference type="eggNOG" id="KOG3459">
    <property type="taxonomic scope" value="Eukaryota"/>
</dbReference>
<dbReference type="GeneTree" id="ENSGT00390000017608"/>
<dbReference type="HOGENOM" id="CLU_076902_2_1_1"/>
<dbReference type="InParanoid" id="P62316"/>
<dbReference type="OMA" id="DVKEMWT"/>
<dbReference type="OrthoDB" id="9529205at2759"/>
<dbReference type="PAN-GO" id="P62316">
    <property type="GO annotations" value="7 GO annotations based on evolutionary models"/>
</dbReference>
<dbReference type="PhylomeDB" id="P62316"/>
<dbReference type="TreeFam" id="TF319595"/>
<dbReference type="PathwayCommons" id="P62316"/>
<dbReference type="Reactome" id="R-HSA-191859">
    <property type="pathway name" value="snRNP Assembly"/>
</dbReference>
<dbReference type="Reactome" id="R-HSA-72163">
    <property type="pathway name" value="mRNA Splicing - Major Pathway"/>
</dbReference>
<dbReference type="Reactome" id="R-HSA-72165">
    <property type="pathway name" value="mRNA Splicing - Minor Pathway"/>
</dbReference>
<dbReference type="Reactome" id="R-HSA-9754678">
    <property type="pathway name" value="SARS-CoV-2 modulates host translation machinery"/>
</dbReference>
<dbReference type="SignaLink" id="P62316"/>
<dbReference type="SIGNOR" id="P62316"/>
<dbReference type="BioGRID-ORCS" id="6633">
    <property type="hits" value="834 hits in 1133 CRISPR screens"/>
</dbReference>
<dbReference type="CD-CODE" id="6F24707C">
    <property type="entry name" value="Cajal body"/>
</dbReference>
<dbReference type="CD-CODE" id="91857CE7">
    <property type="entry name" value="Nucleolus"/>
</dbReference>
<dbReference type="ChiTaRS" id="SNRPD2">
    <property type="organism name" value="human"/>
</dbReference>
<dbReference type="EvolutionaryTrace" id="P62316"/>
<dbReference type="GenomeRNAi" id="6633"/>
<dbReference type="Pharos" id="P62316">
    <property type="development level" value="Tbio"/>
</dbReference>
<dbReference type="PRO" id="PR:P62316"/>
<dbReference type="Proteomes" id="UP000005640">
    <property type="component" value="Chromosome 19"/>
</dbReference>
<dbReference type="RNAct" id="P62316">
    <property type="molecule type" value="protein"/>
</dbReference>
<dbReference type="Bgee" id="ENSG00000125743">
    <property type="expression patterns" value="Expressed in adult organism and 212 other cell types or tissues"/>
</dbReference>
<dbReference type="ExpressionAtlas" id="P62316">
    <property type="expression patterns" value="baseline and differential"/>
</dbReference>
<dbReference type="GO" id="GO:0071013">
    <property type="term" value="C:catalytic step 2 spliceosome"/>
    <property type="evidence" value="ECO:0000314"/>
    <property type="project" value="UniProtKB"/>
</dbReference>
<dbReference type="GO" id="GO:0005829">
    <property type="term" value="C:cytosol"/>
    <property type="evidence" value="ECO:0000314"/>
    <property type="project" value="HPA"/>
</dbReference>
<dbReference type="GO" id="GO:0070062">
    <property type="term" value="C:extracellular exosome"/>
    <property type="evidence" value="ECO:0007005"/>
    <property type="project" value="UniProtKB"/>
</dbReference>
<dbReference type="GO" id="GO:0034709">
    <property type="term" value="C:methylosome"/>
    <property type="evidence" value="ECO:0000314"/>
    <property type="project" value="UniProtKB"/>
</dbReference>
<dbReference type="GO" id="GO:0005654">
    <property type="term" value="C:nucleoplasm"/>
    <property type="evidence" value="ECO:0000304"/>
    <property type="project" value="Reactome"/>
</dbReference>
<dbReference type="GO" id="GO:0005634">
    <property type="term" value="C:nucleus"/>
    <property type="evidence" value="ECO:0000314"/>
    <property type="project" value="UniProtKB"/>
</dbReference>
<dbReference type="GO" id="GO:0034715">
    <property type="term" value="C:pICln-Sm protein complex"/>
    <property type="evidence" value="ECO:0000314"/>
    <property type="project" value="UniProtKB"/>
</dbReference>
<dbReference type="GO" id="GO:0071011">
    <property type="term" value="C:precatalytic spliceosome"/>
    <property type="evidence" value="ECO:0000318"/>
    <property type="project" value="GO_Central"/>
</dbReference>
<dbReference type="GO" id="GO:0030532">
    <property type="term" value="C:small nuclear ribonucleoprotein complex"/>
    <property type="evidence" value="ECO:0000304"/>
    <property type="project" value="ProtInc"/>
</dbReference>
<dbReference type="GO" id="GO:0034719">
    <property type="term" value="C:SMN-Sm protein complex"/>
    <property type="evidence" value="ECO:0000314"/>
    <property type="project" value="UniProtKB"/>
</dbReference>
<dbReference type="GO" id="GO:0005681">
    <property type="term" value="C:spliceosomal complex"/>
    <property type="evidence" value="ECO:0000353"/>
    <property type="project" value="ComplexPortal"/>
</dbReference>
<dbReference type="GO" id="GO:0005685">
    <property type="term" value="C:U1 snRNP"/>
    <property type="evidence" value="ECO:0000314"/>
    <property type="project" value="UniProtKB"/>
</dbReference>
<dbReference type="GO" id="GO:0005689">
    <property type="term" value="C:U12-type spliceosomal complex"/>
    <property type="evidence" value="ECO:0000314"/>
    <property type="project" value="UniProtKB"/>
</dbReference>
<dbReference type="GO" id="GO:0005686">
    <property type="term" value="C:U2 snRNP"/>
    <property type="evidence" value="ECO:0000318"/>
    <property type="project" value="GO_Central"/>
</dbReference>
<dbReference type="GO" id="GO:0071007">
    <property type="term" value="C:U2-type catalytic step 2 spliceosome"/>
    <property type="evidence" value="ECO:0000314"/>
    <property type="project" value="UniProtKB"/>
</dbReference>
<dbReference type="GO" id="GO:0071005">
    <property type="term" value="C:U2-type precatalytic spliceosome"/>
    <property type="evidence" value="ECO:0000314"/>
    <property type="project" value="UniProtKB"/>
</dbReference>
<dbReference type="GO" id="GO:0005684">
    <property type="term" value="C:U2-type spliceosomal complex"/>
    <property type="evidence" value="ECO:0000314"/>
    <property type="project" value="UniProtKB"/>
</dbReference>
<dbReference type="GO" id="GO:0005687">
    <property type="term" value="C:U4 snRNP"/>
    <property type="evidence" value="ECO:0000314"/>
    <property type="project" value="UniProtKB"/>
</dbReference>
<dbReference type="GO" id="GO:0046540">
    <property type="term" value="C:U4/U6 x U5 tri-snRNP complex"/>
    <property type="evidence" value="ECO:0000314"/>
    <property type="project" value="UniProtKB"/>
</dbReference>
<dbReference type="GO" id="GO:0005682">
    <property type="term" value="C:U5 snRNP"/>
    <property type="evidence" value="ECO:0000318"/>
    <property type="project" value="GO_Central"/>
</dbReference>
<dbReference type="GO" id="GO:0003723">
    <property type="term" value="F:RNA binding"/>
    <property type="evidence" value="ECO:0007005"/>
    <property type="project" value="UniProtKB"/>
</dbReference>
<dbReference type="GO" id="GO:0036261">
    <property type="term" value="P:7-methylguanosine cap hypermethylation"/>
    <property type="evidence" value="ECO:0000303"/>
    <property type="project" value="ComplexPortal"/>
</dbReference>
<dbReference type="GO" id="GO:0000398">
    <property type="term" value="P:mRNA splicing, via spliceosome"/>
    <property type="evidence" value="ECO:0000314"/>
    <property type="project" value="UniProtKB"/>
</dbReference>
<dbReference type="GO" id="GO:0008380">
    <property type="term" value="P:RNA splicing"/>
    <property type="evidence" value="ECO:0000304"/>
    <property type="project" value="ProtInc"/>
</dbReference>
<dbReference type="GO" id="GO:0000245">
    <property type="term" value="P:spliceosomal complex assembly"/>
    <property type="evidence" value="ECO:0000304"/>
    <property type="project" value="ProtInc"/>
</dbReference>
<dbReference type="GO" id="GO:0000387">
    <property type="term" value="P:spliceosomal snRNP assembly"/>
    <property type="evidence" value="ECO:0000314"/>
    <property type="project" value="UniProtKB"/>
</dbReference>
<dbReference type="GO" id="GO:1903241">
    <property type="term" value="P:U2-type prespliceosome assembly"/>
    <property type="evidence" value="ECO:0000303"/>
    <property type="project" value="ComplexPortal"/>
</dbReference>
<dbReference type="CDD" id="cd01720">
    <property type="entry name" value="Sm_D2"/>
    <property type="match status" value="1"/>
</dbReference>
<dbReference type="FunFam" id="2.30.30.100:FF:000069">
    <property type="entry name" value="Small nuclear ribonucleoprotein Sm D2"/>
    <property type="match status" value="1"/>
</dbReference>
<dbReference type="Gene3D" id="2.30.30.100">
    <property type="match status" value="1"/>
</dbReference>
<dbReference type="IDEAL" id="IID00160"/>
<dbReference type="InterPro" id="IPR010920">
    <property type="entry name" value="LSM_dom_sf"/>
</dbReference>
<dbReference type="InterPro" id="IPR047575">
    <property type="entry name" value="Sm"/>
</dbReference>
<dbReference type="InterPro" id="IPR027248">
    <property type="entry name" value="Sm_D2"/>
</dbReference>
<dbReference type="InterPro" id="IPR001163">
    <property type="entry name" value="Sm_dom_euk/arc"/>
</dbReference>
<dbReference type="PANTHER" id="PTHR12777">
    <property type="entry name" value="SMALL NUCLEAR RIBONUCLEOPROTEIN SM D2"/>
    <property type="match status" value="1"/>
</dbReference>
<dbReference type="Pfam" id="PF01423">
    <property type="entry name" value="LSM"/>
    <property type="match status" value="1"/>
</dbReference>
<dbReference type="SMART" id="SM00651">
    <property type="entry name" value="Sm"/>
    <property type="match status" value="1"/>
</dbReference>
<dbReference type="SUPFAM" id="SSF50182">
    <property type="entry name" value="Sm-like ribonucleoproteins"/>
    <property type="match status" value="1"/>
</dbReference>
<dbReference type="PROSITE" id="PS52002">
    <property type="entry name" value="SM"/>
    <property type="match status" value="1"/>
</dbReference>
<feature type="initiator methionine" description="Removed" evidence="22 38 40">
    <location>
        <position position="1"/>
    </location>
</feature>
<feature type="chain" id="PRO_0000122207" description="Small nuclear ribonucleoprotein Sm D2">
    <location>
        <begin position="2"/>
        <end position="118"/>
    </location>
</feature>
<feature type="domain" description="Sm" evidence="1">
    <location>
        <begin position="29"/>
        <end position="115"/>
    </location>
</feature>
<feature type="region of interest" description="Disordered" evidence="2">
    <location>
        <begin position="1"/>
        <end position="31"/>
    </location>
</feature>
<feature type="compositionally biased region" description="Basic and acidic residues" evidence="2">
    <location>
        <begin position="7"/>
        <end position="21"/>
    </location>
</feature>
<feature type="modified residue" description="N-acetylserine" evidence="22 38 40">
    <location>
        <position position="2"/>
    </location>
</feature>
<feature type="modified residue" description="Phosphoserine" evidence="39">
    <location>
        <position position="9"/>
    </location>
</feature>
<feature type="modified residue" description="Phosphothreonine" evidence="37 39">
    <location>
        <position position="12"/>
    </location>
</feature>
<feature type="cross-link" description="Glycyl lysine isopeptide (Lys-Gly) (interchain with G-Cter in SUMO2)" evidence="41">
    <location>
        <position position="6"/>
    </location>
</feature>
<feature type="cross-link" description="Glycyl lysine isopeptide (Lys-Gly) (interchain with G-Cter in SUMO2)" evidence="41">
    <location>
        <position position="8"/>
    </location>
</feature>
<feature type="splice variant" id="VSP_045371" description="In isoform 2." evidence="23">
    <location>
        <begin position="1"/>
        <end position="10"/>
    </location>
</feature>
<feature type="sequence conflict" description="In Ref. 5; BU531743." evidence="24" ref="5">
    <original>N</original>
    <variation>S</variation>
    <location>
        <position position="38"/>
    </location>
</feature>
<feature type="helix" evidence="44">
    <location>
        <begin position="15"/>
        <end position="17"/>
    </location>
</feature>
<feature type="helix" evidence="46">
    <location>
        <begin position="19"/>
        <end position="22"/>
    </location>
</feature>
<feature type="turn" evidence="43">
    <location>
        <begin position="23"/>
        <end position="25"/>
    </location>
</feature>
<feature type="helix" evidence="42">
    <location>
        <begin position="28"/>
        <end position="38"/>
    </location>
</feature>
<feature type="strand" evidence="42">
    <location>
        <begin position="41"/>
        <end position="46"/>
    </location>
</feature>
<feature type="turn" evidence="46">
    <location>
        <begin position="47"/>
        <end position="49"/>
    </location>
</feature>
<feature type="strand" evidence="42">
    <location>
        <begin position="51"/>
        <end position="59"/>
    </location>
</feature>
<feature type="strand" evidence="42">
    <location>
        <begin position="65"/>
        <end position="73"/>
    </location>
</feature>
<feature type="strand" evidence="45">
    <location>
        <begin position="83"/>
        <end position="85"/>
    </location>
</feature>
<feature type="strand" evidence="42">
    <location>
        <begin position="94"/>
        <end position="101"/>
    </location>
</feature>
<feature type="helix" evidence="42">
    <location>
        <begin position="103"/>
        <end position="105"/>
    </location>
</feature>
<feature type="strand" evidence="42">
    <location>
        <begin position="106"/>
        <end position="111"/>
    </location>
</feature>
<comment type="function">
    <text evidence="5 6 8 9 12 13 14 15 16 17 19">Plays a role in pre-mRNA splicing as a core component of the spliceosomal U1, U2, U4 and U5 small nuclear ribonucleoproteins (snRNPs), the building blocks of the spliceosome (PubMed:11991638, PubMed:18984161, PubMed:19325628, PubMed:23333303, PubMed:25555158, PubMed:26912367, PubMed:28076346, PubMed:28502770, PubMed:28781166, PubMed:32494006). Component of both the pre-catalytic spliceosome B complex and activated spliceosome C complexes (PubMed:11991638, PubMed:28076346, PubMed:28502770, PubMed:28781166). As a component of the minor spliceosome, involved in the splicing of U12-type introns in pre-mRNAs (PubMed:15146077).</text>
</comment>
<comment type="subunit">
    <text evidence="3 4 5 6 7 8 9 10 11 12 13 14 15 16 17 18 19 20 21">Core component of the spliceosomal U1, U2, U4 and U5 small nuclear ribonucleoproteins (snRNPs), the building blocks of the spliceosome (PubMed:11991638, PubMed:19325628, PubMed:21516107, PubMed:25555158, PubMed:26912367, PubMed:28076346, PubMed:28502770, PubMed:28781166, PubMed:32494006, PubMed:36797247). Most spliceosomal snRNPs contain a common set of Sm proteins, SNRPB, SNRPD1, SNRPD2, SNRPD3, SNRPE, SNRPF and SNRPG that assemble in a heptameric protein ring on the Sm site of the small nuclear RNA to form the core snRNP (PubMed:10025403, PubMed:19325628, PubMed:21516107, PubMed:25555158, PubMed:26912367, PubMed:28076346, PubMed:28502770, PubMed:28781166). Component of the U1 snRNP (PubMed:19325628, PubMed:25555158). The U1 snRNP is composed of the U1 snRNA and the 7 core Sm proteins SNRPB, SNRPD1, SNRPD2, SNRPD3, SNRPE, SNRPF and SNRPG, and at least three U1 snRNP-specific proteins SNRNP70/U1-70K, SNRPA/U1-A and SNRPC/U1-C (PubMed:19325628, PubMed:25555158). Component of the U4/U6-U5 tri-snRNP complex composed of the U4, U6 and U5 snRNAs and at least PRPF3, PRPF4, PRPF6, PRPF8, PRPF31, SNRNP200, TXNL4A, SNRNP40, SNRPB, SNRPD1, SNRPD2, SNRPD3, SNRPE, SNRPF, SNRPG, DDX23, CD2BP2, PPIH, SNU13, EFTUD2, SART1 and USP39, plus LSM2, LSM3, LSM4, LSM5, LSM6, LSM7 and LSM8 (PubMed:26912367). Component of the minor spliceosome, which splices U12-type introns (PubMed:15146077, PubMed:33509932). Part of the SMN-Sm complex that contains SMN1, GEMIN2/SIP1, DDX20/GEMIN3, GEMIN4, GEMIN5, GEMIN6, GEMIN7, GEMIN8, STRAP/UNRIP and the Sm proteins SNRPB, SNRPD1, SNRPD2, SNRPD3, SNRPE, SNRPF and SNRPG; catalyzes core snRNPs assembly (PubMed:16314521). Forms a 6S pICln-Sm complex composed of CLNS1A/pICln, SNRPD1, SNRPD2, SNRPE, SNRPF and SNRPG; ring-like structure where CLNS1A/pICln mimics additional Sm proteins and which is unable to assemble into the core snRNP. Interacts with SMN1; the interaction is direct (PubMed:21816274). Interacts with GEMIN2; the interaction is direct (PubMed:21816274, PubMed:31799625). Interacts with SNRPD1; the interaction is direct (PubMed:21816274, PubMed:31799625). Interacts with SNRPF; the interaction is direct (PubMed:21816274, PubMed:31799625).</text>
</comment>
<comment type="interaction">
    <interactant intactId="EBI-297993">
        <id>P62316</id>
    </interactant>
    <interactant intactId="EBI-930964">
        <id>P54253</id>
        <label>ATXN1</label>
    </interactant>
    <organismsDiffer>false</organismsDiffer>
    <experiments>3</experiments>
</comment>
<comment type="interaction">
    <interactant intactId="EBI-297993">
        <id>P62316</id>
    </interactant>
    <interactant intactId="EBI-739624">
        <id>Q8NHQ1</id>
        <label>CEP70</label>
    </interactant>
    <organismsDiffer>false</organismsDiffer>
    <experiments>3</experiments>
</comment>
<comment type="interaction">
    <interactant intactId="EBI-297993">
        <id>P62316</id>
    </interactant>
    <interactant intactId="EBI-739784">
        <id>Q9BW66</id>
        <label>CINP</label>
    </interactant>
    <organismsDiffer>false</organismsDiffer>
    <experiments>3</experiments>
</comment>
<comment type="interaction">
    <interactant intactId="EBI-297993">
        <id>P62316</id>
    </interactant>
    <interactant intactId="EBI-724693">
        <id>P54105</id>
        <label>CLNS1A</label>
    </interactant>
    <organismsDiffer>false</organismsDiffer>
    <experiments>13</experiments>
</comment>
<comment type="interaction">
    <interactant intactId="EBI-297993">
        <id>P62316</id>
    </interactant>
    <interactant intactId="EBI-752301">
        <id>Q8WXD5</id>
        <label>GEMIN6</label>
    </interactant>
    <organismsDiffer>false</organismsDiffer>
    <experiments>2</experiments>
</comment>
<comment type="interaction">
    <interactant intactId="EBI-297993">
        <id>P62316</id>
    </interactant>
    <interactant intactId="EBI-466029">
        <id>P42858</id>
        <label>HTT</label>
    </interactant>
    <organismsDiffer>false</organismsDiffer>
    <experiments>3</experiments>
</comment>
<comment type="interaction">
    <interactant intactId="EBI-297993">
        <id>P62316</id>
    </interactant>
    <interactant intactId="EBI-347416">
        <id>Q9Y333</id>
        <label>LSM2</label>
    </interactant>
    <organismsDiffer>false</organismsDiffer>
    <experiments>4</experiments>
</comment>
<comment type="interaction">
    <interactant intactId="EBI-297993">
        <id>P62316</id>
    </interactant>
    <interactant intactId="EBI-373310">
        <id>P62312</id>
        <label>LSM6</label>
    </interactant>
    <organismsDiffer>false</organismsDiffer>
    <experiments>6</experiments>
</comment>
<comment type="interaction">
    <interactant intactId="EBI-297993">
        <id>P62316</id>
    </interactant>
    <interactant intactId="EBI-2462271">
        <id>Q15428</id>
        <label>SF3A2</label>
    </interactant>
    <organismsDiffer>false</organismsDiffer>
    <experiments>2</experiments>
</comment>
<comment type="interaction">
    <interactant intactId="EBI-297993">
        <id>P62316</id>
    </interactant>
    <interactant intactId="EBI-372177">
        <id>P62314</id>
        <label>SNRPD1</label>
    </interactant>
    <organismsDiffer>false</organismsDiffer>
    <experiments>4</experiments>
</comment>
<comment type="interaction">
    <interactant intactId="EBI-297993">
        <id>P62316</id>
    </interactant>
    <interactant intactId="EBI-356900">
        <id>P62306</id>
        <label>SNRPF</label>
    </interactant>
    <organismsDiffer>false</organismsDiffer>
    <experiments>15</experiments>
</comment>
<comment type="interaction">
    <interactant intactId="EBI-297993">
        <id>P62316</id>
    </interactant>
    <interactant intactId="EBI-12023934">
        <id>Q5MJ10</id>
        <label>SPANXN2</label>
    </interactant>
    <organismsDiffer>false</organismsDiffer>
    <experiments>3</experiments>
</comment>
<comment type="interaction">
    <interactant intactId="EBI-297993">
        <id>P62316</id>
    </interactant>
    <interactant intactId="EBI-727414">
        <id>Q9Y3F4</id>
        <label>STRAP</label>
    </interactant>
    <organismsDiffer>false</organismsDiffer>
    <experiments>2</experiments>
</comment>
<comment type="subcellular location">
    <subcellularLocation>
        <location evidence="8">Cytoplasm</location>
        <location evidence="8">Cytosol</location>
    </subcellularLocation>
    <subcellularLocation>
        <location evidence="5 14 15 16 17">Nucleus</location>
    </subcellularLocation>
    <text evidence="24">SMN-mediated assembly into core snRNPs occurs in the cytosol before SMN-mediated transport to the nucleus to be included in spliceosomes.</text>
</comment>
<comment type="alternative products">
    <event type="alternative splicing"/>
    <isoform>
        <id>P62316-1</id>
        <name>1</name>
        <sequence type="displayed"/>
    </isoform>
    <isoform>
        <id>P62316-2</id>
        <name>2</name>
        <sequence type="described" ref="VSP_045371"/>
    </isoform>
</comment>
<comment type="miscellaneous">
    <text>In the autoimmune disease systemic lupus erythematosus, antinuclear antibodies are developed with Sm specificity.</text>
</comment>
<comment type="similarity">
    <text evidence="24">Belongs to the snRNP core protein family.</text>
</comment>
<evidence type="ECO:0000255" key="1">
    <source>
        <dbReference type="PROSITE-ProRule" id="PRU01346"/>
    </source>
</evidence>
<evidence type="ECO:0000256" key="2">
    <source>
        <dbReference type="SAM" id="MobiDB-lite"/>
    </source>
</evidence>
<evidence type="ECO:0000269" key="3">
    <source>
    </source>
</evidence>
<evidence type="ECO:0000269" key="4">
    <source>
    </source>
</evidence>
<evidence type="ECO:0000269" key="5">
    <source>
    </source>
</evidence>
<evidence type="ECO:0000269" key="6">
    <source>
    </source>
</evidence>
<evidence type="ECO:0000269" key="7">
    <source>
    </source>
</evidence>
<evidence type="ECO:0000269" key="8">
    <source>
    </source>
</evidence>
<evidence type="ECO:0000269" key="9">
    <source>
    </source>
</evidence>
<evidence type="ECO:0000269" key="10">
    <source>
    </source>
</evidence>
<evidence type="ECO:0000269" key="11">
    <source>
    </source>
</evidence>
<evidence type="ECO:0000269" key="12">
    <source>
    </source>
</evidence>
<evidence type="ECO:0000269" key="13">
    <source>
    </source>
</evidence>
<evidence type="ECO:0000269" key="14">
    <source>
    </source>
</evidence>
<evidence type="ECO:0000269" key="15">
    <source>
    </source>
</evidence>
<evidence type="ECO:0000269" key="16">
    <source>
    </source>
</evidence>
<evidence type="ECO:0000269" key="17">
    <source>
    </source>
</evidence>
<evidence type="ECO:0000269" key="18">
    <source>
    </source>
</evidence>
<evidence type="ECO:0000269" key="19">
    <source>
    </source>
</evidence>
<evidence type="ECO:0000269" key="20">
    <source>
    </source>
</evidence>
<evidence type="ECO:0000269" key="21">
    <source>
    </source>
</evidence>
<evidence type="ECO:0000269" key="22">
    <source ref="6"/>
</evidence>
<evidence type="ECO:0000303" key="23">
    <source>
    </source>
</evidence>
<evidence type="ECO:0000305" key="24"/>
<evidence type="ECO:0007744" key="25">
    <source>
        <dbReference type="PDB" id="3JCR"/>
    </source>
</evidence>
<evidence type="ECO:0007744" key="26">
    <source>
        <dbReference type="PDB" id="4PJO"/>
    </source>
</evidence>
<evidence type="ECO:0007744" key="27">
    <source>
        <dbReference type="PDB" id="5MQF"/>
    </source>
</evidence>
<evidence type="ECO:0007744" key="28">
    <source>
        <dbReference type="PDB" id="5O9Z"/>
    </source>
</evidence>
<evidence type="ECO:0007744" key="29">
    <source>
        <dbReference type="PDB" id="5XJC"/>
    </source>
</evidence>
<evidence type="ECO:0007744" key="30">
    <source>
        <dbReference type="PDB" id="5XJL"/>
    </source>
</evidence>
<evidence type="ECO:0007744" key="31">
    <source>
        <dbReference type="PDB" id="5XJQ"/>
    </source>
</evidence>
<evidence type="ECO:0007744" key="32">
    <source>
        <dbReference type="PDB" id="5XJR"/>
    </source>
</evidence>
<evidence type="ECO:0007744" key="33">
    <source>
        <dbReference type="PDB" id="5XJS"/>
    </source>
</evidence>
<evidence type="ECO:0007744" key="34">
    <source>
        <dbReference type="PDB" id="6Y5Q"/>
    </source>
</evidence>
<evidence type="ECO:0007744" key="35">
    <source>
        <dbReference type="PDB" id="7DVQ"/>
    </source>
</evidence>
<evidence type="ECO:0007744" key="36">
    <source>
        <dbReference type="PDB" id="8HK1"/>
    </source>
</evidence>
<evidence type="ECO:0007744" key="37">
    <source>
    </source>
</evidence>
<evidence type="ECO:0007744" key="38">
    <source>
    </source>
</evidence>
<evidence type="ECO:0007744" key="39">
    <source>
    </source>
</evidence>
<evidence type="ECO:0007744" key="40">
    <source>
    </source>
</evidence>
<evidence type="ECO:0007744" key="41">
    <source>
    </source>
</evidence>
<evidence type="ECO:0007829" key="42">
    <source>
        <dbReference type="PDB" id="1B34"/>
    </source>
</evidence>
<evidence type="ECO:0007829" key="43">
    <source>
        <dbReference type="PDB" id="5XJL"/>
    </source>
</evidence>
<evidence type="ECO:0007829" key="44">
    <source>
        <dbReference type="PDB" id="5XJQ"/>
    </source>
</evidence>
<evidence type="ECO:0007829" key="45">
    <source>
        <dbReference type="PDB" id="6ID1"/>
    </source>
</evidence>
<evidence type="ECO:0007829" key="46">
    <source>
        <dbReference type="PDB" id="8Q91"/>
    </source>
</evidence>